<reference key="1">
    <citation type="submission" date="2008-04" db="EMBL/GenBank/DDBJ databases">
        <title>Complete sequence of chromosome of Exiguobacterium sibiricum 255-15.</title>
        <authorList>
            <consortium name="US DOE Joint Genome Institute"/>
            <person name="Copeland A."/>
            <person name="Lucas S."/>
            <person name="Lapidus A."/>
            <person name="Glavina del Rio T."/>
            <person name="Dalin E."/>
            <person name="Tice H."/>
            <person name="Bruce D."/>
            <person name="Goodwin L."/>
            <person name="Pitluck S."/>
            <person name="Kiss H."/>
            <person name="Chertkov O."/>
            <person name="Monk C."/>
            <person name="Brettin T."/>
            <person name="Detter J.C."/>
            <person name="Han C."/>
            <person name="Kuske C.R."/>
            <person name="Schmutz J."/>
            <person name="Larimer F."/>
            <person name="Land M."/>
            <person name="Hauser L."/>
            <person name="Kyrpides N."/>
            <person name="Mikhailova N."/>
            <person name="Vishnivetskaya T."/>
            <person name="Rodrigues D.F."/>
            <person name="Gilichinsky D."/>
            <person name="Tiedje J."/>
            <person name="Richardson P."/>
        </authorList>
    </citation>
    <scope>NUCLEOTIDE SEQUENCE [LARGE SCALE GENOMIC DNA]</scope>
    <source>
        <strain>DSM 17290 / CCUG 55495 / CIP 109462 / JCM 13490 / 255-15</strain>
    </source>
</reference>
<dbReference type="EC" id="3.2.2.23" evidence="2"/>
<dbReference type="EC" id="4.2.99.18" evidence="2"/>
<dbReference type="EMBL" id="CP001022">
    <property type="protein sequence ID" value="ACB61653.1"/>
    <property type="molecule type" value="Genomic_DNA"/>
</dbReference>
<dbReference type="RefSeq" id="WP_012371070.1">
    <property type="nucleotide sequence ID" value="NC_010556.1"/>
</dbReference>
<dbReference type="SMR" id="B1YKA0"/>
<dbReference type="STRING" id="262543.Exig_2201"/>
<dbReference type="KEGG" id="esi:Exig_2201"/>
<dbReference type="eggNOG" id="COG0266">
    <property type="taxonomic scope" value="Bacteria"/>
</dbReference>
<dbReference type="HOGENOM" id="CLU_038423_1_3_9"/>
<dbReference type="OrthoDB" id="9800855at2"/>
<dbReference type="Proteomes" id="UP000001681">
    <property type="component" value="Chromosome"/>
</dbReference>
<dbReference type="GO" id="GO:0034039">
    <property type="term" value="F:8-oxo-7,8-dihydroguanine DNA N-glycosylase activity"/>
    <property type="evidence" value="ECO:0007669"/>
    <property type="project" value="TreeGrafter"/>
</dbReference>
<dbReference type="GO" id="GO:0140078">
    <property type="term" value="F:class I DNA-(apurinic or apyrimidinic site) endonuclease activity"/>
    <property type="evidence" value="ECO:0007669"/>
    <property type="project" value="UniProtKB-EC"/>
</dbReference>
<dbReference type="GO" id="GO:0003684">
    <property type="term" value="F:damaged DNA binding"/>
    <property type="evidence" value="ECO:0007669"/>
    <property type="project" value="InterPro"/>
</dbReference>
<dbReference type="GO" id="GO:0008270">
    <property type="term" value="F:zinc ion binding"/>
    <property type="evidence" value="ECO:0007669"/>
    <property type="project" value="UniProtKB-UniRule"/>
</dbReference>
<dbReference type="GO" id="GO:0006284">
    <property type="term" value="P:base-excision repair"/>
    <property type="evidence" value="ECO:0007669"/>
    <property type="project" value="InterPro"/>
</dbReference>
<dbReference type="CDD" id="cd08966">
    <property type="entry name" value="EcFpg-like_N"/>
    <property type="match status" value="1"/>
</dbReference>
<dbReference type="FunFam" id="1.10.8.50:FF:000003">
    <property type="entry name" value="Formamidopyrimidine-DNA glycosylase"/>
    <property type="match status" value="1"/>
</dbReference>
<dbReference type="FunFam" id="3.20.190.10:FF:000001">
    <property type="entry name" value="Formamidopyrimidine-DNA glycosylase"/>
    <property type="match status" value="1"/>
</dbReference>
<dbReference type="Gene3D" id="1.10.8.50">
    <property type="match status" value="1"/>
</dbReference>
<dbReference type="Gene3D" id="3.20.190.10">
    <property type="entry name" value="MutM-like, N-terminal"/>
    <property type="match status" value="1"/>
</dbReference>
<dbReference type="HAMAP" id="MF_00103">
    <property type="entry name" value="Fapy_DNA_glycosyl"/>
    <property type="match status" value="1"/>
</dbReference>
<dbReference type="InterPro" id="IPR015886">
    <property type="entry name" value="DNA_glyclase/AP_lyase_DNA-bd"/>
</dbReference>
<dbReference type="InterPro" id="IPR015887">
    <property type="entry name" value="DNA_glyclase_Znf_dom_DNA_BS"/>
</dbReference>
<dbReference type="InterPro" id="IPR020629">
    <property type="entry name" value="Formamido-pyr_DNA_Glyclase"/>
</dbReference>
<dbReference type="InterPro" id="IPR012319">
    <property type="entry name" value="FPG_cat"/>
</dbReference>
<dbReference type="InterPro" id="IPR035937">
    <property type="entry name" value="MutM-like_N-ter"/>
</dbReference>
<dbReference type="InterPro" id="IPR010979">
    <property type="entry name" value="Ribosomal_uS13-like_H2TH"/>
</dbReference>
<dbReference type="InterPro" id="IPR000214">
    <property type="entry name" value="Znf_DNA_glyclase/AP_lyase"/>
</dbReference>
<dbReference type="InterPro" id="IPR010663">
    <property type="entry name" value="Znf_FPG/IleRS"/>
</dbReference>
<dbReference type="NCBIfam" id="TIGR00577">
    <property type="entry name" value="fpg"/>
    <property type="match status" value="1"/>
</dbReference>
<dbReference type="NCBIfam" id="NF002211">
    <property type="entry name" value="PRK01103.1"/>
    <property type="match status" value="1"/>
</dbReference>
<dbReference type="PANTHER" id="PTHR22993">
    <property type="entry name" value="FORMAMIDOPYRIMIDINE-DNA GLYCOSYLASE"/>
    <property type="match status" value="1"/>
</dbReference>
<dbReference type="PANTHER" id="PTHR22993:SF9">
    <property type="entry name" value="FORMAMIDOPYRIMIDINE-DNA GLYCOSYLASE"/>
    <property type="match status" value="1"/>
</dbReference>
<dbReference type="Pfam" id="PF01149">
    <property type="entry name" value="Fapy_DNA_glyco"/>
    <property type="match status" value="1"/>
</dbReference>
<dbReference type="Pfam" id="PF06831">
    <property type="entry name" value="H2TH"/>
    <property type="match status" value="1"/>
</dbReference>
<dbReference type="Pfam" id="PF06827">
    <property type="entry name" value="zf-FPG_IleRS"/>
    <property type="match status" value="1"/>
</dbReference>
<dbReference type="SMART" id="SM00898">
    <property type="entry name" value="Fapy_DNA_glyco"/>
    <property type="match status" value="1"/>
</dbReference>
<dbReference type="SMART" id="SM01232">
    <property type="entry name" value="H2TH"/>
    <property type="match status" value="1"/>
</dbReference>
<dbReference type="SUPFAM" id="SSF57716">
    <property type="entry name" value="Glucocorticoid receptor-like (DNA-binding domain)"/>
    <property type="match status" value="1"/>
</dbReference>
<dbReference type="SUPFAM" id="SSF81624">
    <property type="entry name" value="N-terminal domain of MutM-like DNA repair proteins"/>
    <property type="match status" value="1"/>
</dbReference>
<dbReference type="SUPFAM" id="SSF46946">
    <property type="entry name" value="S13-like H2TH domain"/>
    <property type="match status" value="1"/>
</dbReference>
<dbReference type="PROSITE" id="PS51068">
    <property type="entry name" value="FPG_CAT"/>
    <property type="match status" value="1"/>
</dbReference>
<dbReference type="PROSITE" id="PS01242">
    <property type="entry name" value="ZF_FPG_1"/>
    <property type="match status" value="1"/>
</dbReference>
<dbReference type="PROSITE" id="PS51066">
    <property type="entry name" value="ZF_FPG_2"/>
    <property type="match status" value="1"/>
</dbReference>
<proteinExistence type="inferred from homology"/>
<feature type="initiator methionine" description="Removed" evidence="1">
    <location>
        <position position="1"/>
    </location>
</feature>
<feature type="chain" id="PRO_1000094046" description="Formamidopyrimidine-DNA glycosylase">
    <location>
        <begin position="2"/>
        <end position="276"/>
    </location>
</feature>
<feature type="zinc finger region" description="FPG-type" evidence="2">
    <location>
        <begin position="239"/>
        <end position="273"/>
    </location>
</feature>
<feature type="active site" description="Schiff-base intermediate with DNA" evidence="2">
    <location>
        <position position="2"/>
    </location>
</feature>
<feature type="active site" description="Proton donor" evidence="2">
    <location>
        <position position="3"/>
    </location>
</feature>
<feature type="active site" description="Proton donor; for beta-elimination activity" evidence="2">
    <location>
        <position position="59"/>
    </location>
</feature>
<feature type="active site" description="Proton donor; for delta-elimination activity" evidence="2">
    <location>
        <position position="263"/>
    </location>
</feature>
<feature type="binding site" evidence="2">
    <location>
        <position position="92"/>
    </location>
    <ligand>
        <name>DNA</name>
        <dbReference type="ChEBI" id="CHEBI:16991"/>
    </ligand>
</feature>
<feature type="binding site" evidence="2">
    <location>
        <position position="111"/>
    </location>
    <ligand>
        <name>DNA</name>
        <dbReference type="ChEBI" id="CHEBI:16991"/>
    </ligand>
</feature>
<feature type="binding site" evidence="2">
    <location>
        <position position="155"/>
    </location>
    <ligand>
        <name>DNA</name>
        <dbReference type="ChEBI" id="CHEBI:16991"/>
    </ligand>
</feature>
<sequence length="276" mass="30969">MPELPEVETVRRSLERTVSGKTISSVKVFHPKMIRGMEVAPFVDALKQERIERVERRGKFLLFTFDRFYLVSHLRMEGKYFPYPQAIEKDKHTHVIFRFTDGSELHYNDVRKFGTMELREKETAMSVPPLAQLEREPFDPTFTAEVLAENLIRKKRSPIKTSLLDQSIFLGLGNIYVDETLFAARVHPLTKAGALTLDDISRIHAAGVDVLAKAVESGGSTIRSYVSPTGKGEFQLQLAVYGQTGAPCPRCGTAIEKIKVGGRGTHFCPTCQQVAL</sequence>
<name>FPG_EXIS2</name>
<evidence type="ECO:0000250" key="1"/>
<evidence type="ECO:0000255" key="2">
    <source>
        <dbReference type="HAMAP-Rule" id="MF_00103"/>
    </source>
</evidence>
<protein>
    <recommendedName>
        <fullName evidence="2">Formamidopyrimidine-DNA glycosylase</fullName>
        <shortName evidence="2">Fapy-DNA glycosylase</shortName>
        <ecNumber evidence="2">3.2.2.23</ecNumber>
    </recommendedName>
    <alternativeName>
        <fullName evidence="2">DNA-(apurinic or apyrimidinic site) lyase MutM</fullName>
        <shortName evidence="2">AP lyase MutM</shortName>
        <ecNumber evidence="2">4.2.99.18</ecNumber>
    </alternativeName>
</protein>
<comment type="function">
    <text evidence="2">Involved in base excision repair of DNA damaged by oxidation or by mutagenic agents. Acts as a DNA glycosylase that recognizes and removes damaged bases. Has a preference for oxidized purines, such as 7,8-dihydro-8-oxoguanine (8-oxoG). Has AP (apurinic/apyrimidinic) lyase activity and introduces nicks in the DNA strand. Cleaves the DNA backbone by beta-delta elimination to generate a single-strand break at the site of the removed base with both 3'- and 5'-phosphates.</text>
</comment>
<comment type="catalytic activity">
    <reaction evidence="2">
        <text>Hydrolysis of DNA containing ring-opened 7-methylguanine residues, releasing 2,6-diamino-4-hydroxy-5-(N-methyl)formamidopyrimidine.</text>
        <dbReference type="EC" id="3.2.2.23"/>
    </reaction>
</comment>
<comment type="catalytic activity">
    <reaction evidence="2">
        <text>2'-deoxyribonucleotide-(2'-deoxyribose 5'-phosphate)-2'-deoxyribonucleotide-DNA = a 3'-end 2'-deoxyribonucleotide-(2,3-dehydro-2,3-deoxyribose 5'-phosphate)-DNA + a 5'-end 5'-phospho-2'-deoxyribonucleoside-DNA + H(+)</text>
        <dbReference type="Rhea" id="RHEA:66592"/>
        <dbReference type="Rhea" id="RHEA-COMP:13180"/>
        <dbReference type="Rhea" id="RHEA-COMP:16897"/>
        <dbReference type="Rhea" id="RHEA-COMP:17067"/>
        <dbReference type="ChEBI" id="CHEBI:15378"/>
        <dbReference type="ChEBI" id="CHEBI:136412"/>
        <dbReference type="ChEBI" id="CHEBI:157695"/>
        <dbReference type="ChEBI" id="CHEBI:167181"/>
        <dbReference type="EC" id="4.2.99.18"/>
    </reaction>
</comment>
<comment type="cofactor">
    <cofactor evidence="2">
        <name>Zn(2+)</name>
        <dbReference type="ChEBI" id="CHEBI:29105"/>
    </cofactor>
    <text evidence="2">Binds 1 zinc ion per subunit.</text>
</comment>
<comment type="subunit">
    <text evidence="2">Monomer.</text>
</comment>
<comment type="similarity">
    <text evidence="2">Belongs to the FPG family.</text>
</comment>
<accession>B1YKA0</accession>
<organism>
    <name type="scientific">Exiguobacterium sibiricum (strain DSM 17290 / CCUG 55495 / CIP 109462 / JCM 13490 / 255-15)</name>
    <dbReference type="NCBI Taxonomy" id="262543"/>
    <lineage>
        <taxon>Bacteria</taxon>
        <taxon>Bacillati</taxon>
        <taxon>Bacillota</taxon>
        <taxon>Bacilli</taxon>
        <taxon>Bacillales</taxon>
        <taxon>Bacillales Family XII. Incertae Sedis</taxon>
        <taxon>Exiguobacterium</taxon>
    </lineage>
</organism>
<gene>
    <name evidence="2" type="primary">mutM</name>
    <name evidence="2" type="synonym">fpg</name>
    <name type="ordered locus">Exig_2201</name>
</gene>
<keyword id="KW-0227">DNA damage</keyword>
<keyword id="KW-0234">DNA repair</keyword>
<keyword id="KW-0238">DNA-binding</keyword>
<keyword id="KW-0326">Glycosidase</keyword>
<keyword id="KW-0378">Hydrolase</keyword>
<keyword id="KW-0456">Lyase</keyword>
<keyword id="KW-0479">Metal-binding</keyword>
<keyword id="KW-0511">Multifunctional enzyme</keyword>
<keyword id="KW-1185">Reference proteome</keyword>
<keyword id="KW-0862">Zinc</keyword>
<keyword id="KW-0863">Zinc-finger</keyword>